<keyword id="KW-0121">Carboxypeptidase</keyword>
<keyword id="KW-1003">Cell membrane</keyword>
<keyword id="KW-0328">Glycosyltransferase</keyword>
<keyword id="KW-0378">Hydrolase</keyword>
<keyword id="KW-0472">Membrane</keyword>
<keyword id="KW-0511">Multifunctional enzyme</keyword>
<keyword id="KW-0645">Protease</keyword>
<keyword id="KW-1185">Reference proteome</keyword>
<keyword id="KW-0808">Transferase</keyword>
<keyword id="KW-0812">Transmembrane</keyword>
<keyword id="KW-1133">Transmembrane helix</keyword>
<proteinExistence type="inferred from homology"/>
<organism>
    <name type="scientific">Mycolicibacterium smegmatis (strain ATCC 700084 / mc(2)155)</name>
    <name type="common">Mycobacterium smegmatis</name>
    <dbReference type="NCBI Taxonomy" id="246196"/>
    <lineage>
        <taxon>Bacteria</taxon>
        <taxon>Bacillati</taxon>
        <taxon>Actinomycetota</taxon>
        <taxon>Actinomycetes</taxon>
        <taxon>Mycobacteriales</taxon>
        <taxon>Mycobacteriaceae</taxon>
        <taxon>Mycolicibacterium</taxon>
    </lineage>
</organism>
<feature type="chain" id="PRO_0000421125" description="Penicillin-binding protein 1A">
    <location>
        <begin position="1"/>
        <end position="785"/>
    </location>
</feature>
<feature type="transmembrane region" description="Helical" evidence="4">
    <location>
        <begin position="77"/>
        <end position="97"/>
    </location>
</feature>
<feature type="region of interest" description="Disordered" evidence="5">
    <location>
        <begin position="1"/>
        <end position="61"/>
    </location>
</feature>
<feature type="region of interest" description="Transglycosylase">
    <location>
        <begin position="118"/>
        <end position="299"/>
    </location>
</feature>
<feature type="region of interest" description="Transpeptidase">
    <location>
        <begin position="392"/>
        <end position="662"/>
    </location>
</feature>
<feature type="region of interest" description="Disordered" evidence="5">
    <location>
        <begin position="605"/>
        <end position="626"/>
    </location>
</feature>
<feature type="region of interest" description="Disordered" evidence="5">
    <location>
        <begin position="690"/>
        <end position="726"/>
    </location>
</feature>
<feature type="region of interest" description="Disordered" evidence="5">
    <location>
        <begin position="738"/>
        <end position="785"/>
    </location>
</feature>
<feature type="compositionally biased region" description="Pro residues" evidence="5">
    <location>
        <begin position="33"/>
        <end position="45"/>
    </location>
</feature>
<feature type="compositionally biased region" description="Gly residues" evidence="5">
    <location>
        <begin position="46"/>
        <end position="59"/>
    </location>
</feature>
<feature type="compositionally biased region" description="Pro residues" evidence="5">
    <location>
        <begin position="708"/>
        <end position="721"/>
    </location>
</feature>
<feature type="compositionally biased region" description="Pro residues" evidence="5">
    <location>
        <begin position="743"/>
        <end position="758"/>
    </location>
</feature>
<feature type="compositionally biased region" description="Low complexity" evidence="5">
    <location>
        <begin position="759"/>
        <end position="775"/>
    </location>
</feature>
<feature type="active site" description="Proton donor; for transglycosylase activity" evidence="3">
    <location>
        <position position="151"/>
    </location>
</feature>
<feature type="active site" description="Acyl-ester intermediate; for transpeptidase activity" evidence="3">
    <location>
        <position position="426"/>
    </location>
</feature>
<sequence>MPPDDRLTAVLPPVRDGDIAPPIDVVRAALEGSPPPKPPPPPPPGRGGGGPSGPGGPSGPGRQFRINWKWVRRGSAIAVAVMVLLPLITFGMAYMIVDVPEPGDIRTPQVSTILASDGSEIARIVPPEGNRVDVKIDQIPVHVRDAVMAAEDRDFYSNPGFSWTGFLRAIKNNLFGGGGLQGGSTITQQYVKNALVGDERSGIGGLIRKAKELVISTKMSGEWSKDAVLQAYLNIIYFGRGAYGISAASKAYFDKPVEQLDVAEGALLAALIQRPSTLDPAVDPEGAADRWNWVLDGMVDIGALSQADRDAQVFPPTVPPDYAFQQNQTTGPNGLIERQVTNELLDLFDINEQTLNTEGLQITTTIDPKAQEAAVDAVDKYLEGQDPDMRAAVVSIDPRTGGIKAYYGGSDANGFDFAQAGLPTGSSFKVFALVAALQQGIGLGYQIDSGPLEVNGIKIGNVEGEGCGTCSIAEALKRSLNTSYYRLMLKLENGPADVAEAAHDAGVAESFPGVEHTLSEDGKGGPPNNGVVLGQYQSRVLDMASAYATLAASGVYHKPHFVEKVVNSSGQVLFDASKEDNGEERIDKAVADNVTSAMQPIAGWSRGHNLAGGRPSAAKTGTVQLGDTGDNRDAWMVGYTPSLSTAVWVGTTEGVKPLVNKWGSPIYGSGLPSDIWKATMDGALEGTDVESFPKPTEIGGYAGVPQAPAAPPPSAGPPTDPGQPSVTVIQPTIEVAPGITIPIGPPTTVPVGPPPGAPGAPVGPGAPEVPVAPGAPGVPGAPPPP</sequence>
<name>PBP1A_MYCS2</name>
<comment type="function">
    <text evidence="1">Cell wall formation. Synthesis of cross-linked peptidoglycan from the lipid intermediates. The enzyme has a penicillin-insensitive transglycosylase N-terminal domain (formation of linear glycan strands) and a penicillin-sensitive transpeptidase C-terminal domain (cross-linking of the peptide subunits) (By similarity).</text>
</comment>
<comment type="catalytic activity">
    <reaction evidence="2">
        <text>[GlcNAc-(1-&gt;4)-Mur2Ac(oyl-L-Ala-gamma-D-Glu-L-Lys-D-Ala-D-Ala)](n)-di-trans,octa-cis-undecaprenyl diphosphate + beta-D-GlcNAc-(1-&gt;4)-Mur2Ac(oyl-L-Ala-gamma-D-Glu-L-Lys-D-Ala-D-Ala)-di-trans,octa-cis-undecaprenyl diphosphate = [GlcNAc-(1-&gt;4)-Mur2Ac(oyl-L-Ala-gamma-D-Glu-L-Lys-D-Ala-D-Ala)](n+1)-di-trans,octa-cis-undecaprenyl diphosphate + di-trans,octa-cis-undecaprenyl diphosphate + H(+)</text>
        <dbReference type="Rhea" id="RHEA:23708"/>
        <dbReference type="Rhea" id="RHEA-COMP:9602"/>
        <dbReference type="Rhea" id="RHEA-COMP:9603"/>
        <dbReference type="ChEBI" id="CHEBI:15378"/>
        <dbReference type="ChEBI" id="CHEBI:58405"/>
        <dbReference type="ChEBI" id="CHEBI:60033"/>
        <dbReference type="ChEBI" id="CHEBI:78435"/>
        <dbReference type="EC" id="2.4.99.28"/>
    </reaction>
</comment>
<comment type="catalytic activity">
    <reaction evidence="2">
        <text>Preferential cleavage: (Ac)2-L-Lys-D-Ala-|-D-Ala. Also transpeptidation of peptidyl-alanyl moieties that are N-acyl substituents of D-alanine.</text>
        <dbReference type="EC" id="3.4.16.4"/>
    </reaction>
</comment>
<comment type="pathway">
    <text>Cell wall biogenesis; peptidoglycan biosynthesis.</text>
</comment>
<comment type="subcellular location">
    <subcellularLocation>
        <location evidence="7">Cell membrane</location>
        <topology evidence="7">Single-pass membrane protein</topology>
    </subcellularLocation>
</comment>
<comment type="disruption phenotype">
    <text evidence="6">Probably essential. In a depletion mutant growth rate is dramatically impaired, cells are short with bulbous poles and/or rounded internal regions.</text>
</comment>
<comment type="sequence caution" evidence="7">
    <conflict type="erroneous initiation">
        <sequence resource="EMBL-CDS" id="AFP43142"/>
    </conflict>
    <text>Truncated N-terminus.</text>
</comment>
<evidence type="ECO:0000250" key="1"/>
<evidence type="ECO:0000250" key="2">
    <source>
        <dbReference type="UniProtKB" id="P02918"/>
    </source>
</evidence>
<evidence type="ECO:0000250" key="3">
    <source>
        <dbReference type="UniProtKB" id="P02919"/>
    </source>
</evidence>
<evidence type="ECO:0000255" key="4"/>
<evidence type="ECO:0000256" key="5">
    <source>
        <dbReference type="SAM" id="MobiDB-lite"/>
    </source>
</evidence>
<evidence type="ECO:0000269" key="6">
    <source>
    </source>
</evidence>
<evidence type="ECO:0000305" key="7"/>
<reference key="1">
    <citation type="submission" date="2006-10" db="EMBL/GenBank/DDBJ databases">
        <authorList>
            <person name="Fleischmann R.D."/>
            <person name="Dodson R.J."/>
            <person name="Haft D.H."/>
            <person name="Merkel J.S."/>
            <person name="Nelson W.C."/>
            <person name="Fraser C.M."/>
        </authorList>
    </citation>
    <scope>NUCLEOTIDE SEQUENCE [LARGE SCALE GENOMIC DNA]</scope>
    <source>
        <strain>ATCC 700084 / mc(2)155</strain>
    </source>
</reference>
<reference key="2">
    <citation type="journal article" date="2007" name="Genome Biol.">
        <title>Interrupted coding sequences in Mycobacterium smegmatis: authentic mutations or sequencing errors?</title>
        <authorList>
            <person name="Deshayes C."/>
            <person name="Perrodou E."/>
            <person name="Gallien S."/>
            <person name="Euphrasie D."/>
            <person name="Schaeffer C."/>
            <person name="Van-Dorsselaer A."/>
            <person name="Poch O."/>
            <person name="Lecompte O."/>
            <person name="Reyrat J.-M."/>
        </authorList>
    </citation>
    <scope>NUCLEOTIDE SEQUENCE [LARGE SCALE GENOMIC DNA]</scope>
    <source>
        <strain>ATCC 700084 / mc(2)155</strain>
    </source>
</reference>
<reference key="3">
    <citation type="journal article" date="2009" name="Genome Res.">
        <title>Ortho-proteogenomics: multiple proteomes investigation through orthology and a new MS-based protocol.</title>
        <authorList>
            <person name="Gallien S."/>
            <person name="Perrodou E."/>
            <person name="Carapito C."/>
            <person name="Deshayes C."/>
            <person name="Reyrat J.-M."/>
            <person name="Van Dorsselaer A."/>
            <person name="Poch O."/>
            <person name="Schaeffer C."/>
            <person name="Lecompte O."/>
        </authorList>
    </citation>
    <scope>NUCLEOTIDE SEQUENCE [LARGE SCALE GENOMIC DNA]</scope>
    <source>
        <strain>ATCC 700084 / mc(2)155</strain>
    </source>
</reference>
<reference key="4">
    <citation type="journal article" date="2010" name="PLoS Pathog.">
        <title>Interaction and modulation of two antagonistic cell wall enzymes of mycobacteria.</title>
        <authorList>
            <person name="Hett E.C."/>
            <person name="Chao M.C."/>
            <person name="Rubin E.J."/>
        </authorList>
    </citation>
    <scope>DISRUPTION PHENOTYPE</scope>
    <source>
        <strain>ATCC 700084 / mc(2)155</strain>
    </source>
</reference>
<gene>
    <name type="primary">ponA1</name>
    <name type="ordered locus">MSMEG_6900</name>
    <name type="ordered locus">MSMEI_6716</name>
</gene>
<accession>A0R7G2</accession>
<accession>I7GBX5</accession>
<dbReference type="EC" id="2.4.99.28" evidence="2"/>
<dbReference type="EC" id="3.4.16.4" evidence="2"/>
<dbReference type="EMBL" id="CP000480">
    <property type="protein sequence ID" value="ABK70639.1"/>
    <property type="molecule type" value="Genomic_DNA"/>
</dbReference>
<dbReference type="EMBL" id="CP001663">
    <property type="protein sequence ID" value="AFP43142.1"/>
    <property type="status" value="ALT_INIT"/>
    <property type="molecule type" value="Genomic_DNA"/>
</dbReference>
<dbReference type="RefSeq" id="WP_011731616.1">
    <property type="nucleotide sequence ID" value="NZ_SIJM01000001.1"/>
</dbReference>
<dbReference type="RefSeq" id="YP_891100.1">
    <property type="nucleotide sequence ID" value="NC_008596.1"/>
</dbReference>
<dbReference type="SMR" id="A0R7G2"/>
<dbReference type="STRING" id="246196.MSMEG_6900"/>
<dbReference type="CAZy" id="GT51">
    <property type="family name" value="Glycosyltransferase Family 51"/>
</dbReference>
<dbReference type="PaxDb" id="246196-MSMEI_6716"/>
<dbReference type="KEGG" id="msg:MSMEI_6716"/>
<dbReference type="KEGG" id="msm:MSMEG_6900"/>
<dbReference type="PATRIC" id="fig|246196.19.peg.6721"/>
<dbReference type="eggNOG" id="COG0744">
    <property type="taxonomic scope" value="Bacteria"/>
</dbReference>
<dbReference type="OrthoDB" id="9766909at2"/>
<dbReference type="UniPathway" id="UPA00219"/>
<dbReference type="Proteomes" id="UP000000757">
    <property type="component" value="Chromosome"/>
</dbReference>
<dbReference type="Proteomes" id="UP000006158">
    <property type="component" value="Chromosome"/>
</dbReference>
<dbReference type="GO" id="GO:0030288">
    <property type="term" value="C:outer membrane-bounded periplasmic space"/>
    <property type="evidence" value="ECO:0007669"/>
    <property type="project" value="TreeGrafter"/>
</dbReference>
<dbReference type="GO" id="GO:0005886">
    <property type="term" value="C:plasma membrane"/>
    <property type="evidence" value="ECO:0007669"/>
    <property type="project" value="UniProtKB-SubCell"/>
</dbReference>
<dbReference type="GO" id="GO:0008658">
    <property type="term" value="F:penicillin binding"/>
    <property type="evidence" value="ECO:0007669"/>
    <property type="project" value="InterPro"/>
</dbReference>
<dbReference type="GO" id="GO:0008955">
    <property type="term" value="F:peptidoglycan glycosyltransferase activity"/>
    <property type="evidence" value="ECO:0007669"/>
    <property type="project" value="TreeGrafter"/>
</dbReference>
<dbReference type="GO" id="GO:0009002">
    <property type="term" value="F:serine-type D-Ala-D-Ala carboxypeptidase activity"/>
    <property type="evidence" value="ECO:0007669"/>
    <property type="project" value="UniProtKB-EC"/>
</dbReference>
<dbReference type="GO" id="GO:0009252">
    <property type="term" value="P:peptidoglycan biosynthetic process"/>
    <property type="evidence" value="ECO:0007669"/>
    <property type="project" value="UniProtKB-UniPathway"/>
</dbReference>
<dbReference type="GO" id="GO:0006508">
    <property type="term" value="P:proteolysis"/>
    <property type="evidence" value="ECO:0007669"/>
    <property type="project" value="UniProtKB-KW"/>
</dbReference>
<dbReference type="Gene3D" id="1.10.3810.10">
    <property type="entry name" value="Biosynthetic peptidoglycan transglycosylase-like"/>
    <property type="match status" value="1"/>
</dbReference>
<dbReference type="Gene3D" id="3.40.710.10">
    <property type="entry name" value="DD-peptidase/beta-lactamase superfamily"/>
    <property type="match status" value="1"/>
</dbReference>
<dbReference type="InterPro" id="IPR012338">
    <property type="entry name" value="Beta-lactam/transpept-like"/>
</dbReference>
<dbReference type="InterPro" id="IPR001264">
    <property type="entry name" value="Glyco_trans_51"/>
</dbReference>
<dbReference type="InterPro" id="IPR050396">
    <property type="entry name" value="Glycosyltr_51/Transpeptidase"/>
</dbReference>
<dbReference type="InterPro" id="IPR023346">
    <property type="entry name" value="Lysozyme-like_dom_sf"/>
</dbReference>
<dbReference type="InterPro" id="IPR036950">
    <property type="entry name" value="PBP_transglycosylase"/>
</dbReference>
<dbReference type="InterPro" id="IPR001460">
    <property type="entry name" value="PCN-bd_Tpept"/>
</dbReference>
<dbReference type="PANTHER" id="PTHR32282">
    <property type="entry name" value="BINDING PROTEIN TRANSPEPTIDASE, PUTATIVE-RELATED"/>
    <property type="match status" value="1"/>
</dbReference>
<dbReference type="PANTHER" id="PTHR32282:SF34">
    <property type="entry name" value="PENICILLIN-BINDING PROTEIN 1A"/>
    <property type="match status" value="1"/>
</dbReference>
<dbReference type="Pfam" id="PF00912">
    <property type="entry name" value="Transgly"/>
    <property type="match status" value="1"/>
</dbReference>
<dbReference type="Pfam" id="PF00905">
    <property type="entry name" value="Transpeptidase"/>
    <property type="match status" value="1"/>
</dbReference>
<dbReference type="SUPFAM" id="SSF56601">
    <property type="entry name" value="beta-lactamase/transpeptidase-like"/>
    <property type="match status" value="1"/>
</dbReference>
<dbReference type="SUPFAM" id="SSF53955">
    <property type="entry name" value="Lysozyme-like"/>
    <property type="match status" value="1"/>
</dbReference>
<protein>
    <recommendedName>
        <fullName>Penicillin-binding protein 1A</fullName>
    </recommendedName>
    <domain>
        <recommendedName>
            <fullName>Penicillin-insensitive transglycosylase</fullName>
            <ecNumber evidence="2">2.4.99.28</ecNumber>
        </recommendedName>
        <alternativeName>
            <fullName>Peptidoglycan TGase</fullName>
        </alternativeName>
    </domain>
    <domain>
        <recommendedName>
            <fullName>Penicillin-sensitive transpeptidase</fullName>
            <ecNumber evidence="2">3.4.16.4</ecNumber>
        </recommendedName>
        <alternativeName>
            <fullName>DD-transpeptidase</fullName>
        </alternativeName>
    </domain>
</protein>